<feature type="chain" id="PRO_1000166680" description="NADH-quinone oxidoreductase subunit C/D">
    <location>
        <begin position="1"/>
        <end position="600"/>
    </location>
</feature>
<feature type="region of interest" description="NADH dehydrogenase I subunit C" evidence="1">
    <location>
        <begin position="1"/>
        <end position="190"/>
    </location>
</feature>
<feature type="region of interest" description="NADH dehydrogenase I subunit D" evidence="1">
    <location>
        <begin position="214"/>
        <end position="600"/>
    </location>
</feature>
<gene>
    <name evidence="1" type="primary">nuoC</name>
    <name evidence="1" type="synonym">nuoCD</name>
    <name evidence="1" type="synonym">nuoD</name>
    <name type="ordered locus">EC55989_2530</name>
</gene>
<name>NUOCD_ECO55</name>
<comment type="function">
    <text evidence="1">NDH-1 shuttles electrons from NADH, via FMN and iron-sulfur (Fe-S) centers, to quinones in the respiratory chain. The immediate electron acceptor for the enzyme in this species is believed to be ubiquinone. Couples the redox reaction to proton translocation (for every two electrons transferred, four hydrogen ions are translocated across the cytoplasmic membrane), and thus conserves the redox energy in a proton gradient.</text>
</comment>
<comment type="catalytic activity">
    <reaction evidence="1">
        <text>a quinone + NADH + 5 H(+)(in) = a quinol + NAD(+) + 4 H(+)(out)</text>
        <dbReference type="Rhea" id="RHEA:57888"/>
        <dbReference type="ChEBI" id="CHEBI:15378"/>
        <dbReference type="ChEBI" id="CHEBI:24646"/>
        <dbReference type="ChEBI" id="CHEBI:57540"/>
        <dbReference type="ChEBI" id="CHEBI:57945"/>
        <dbReference type="ChEBI" id="CHEBI:132124"/>
    </reaction>
</comment>
<comment type="subunit">
    <text evidence="1">NDH-1 is composed of 13 different subunits. Subunits NuoB, CD, E, F, and G constitute the peripheral sector of the complex.</text>
</comment>
<comment type="subcellular location">
    <subcellularLocation>
        <location evidence="1">Cell inner membrane</location>
        <topology evidence="1">Peripheral membrane protein</topology>
        <orientation evidence="1">Cytoplasmic side</orientation>
    </subcellularLocation>
</comment>
<comment type="similarity">
    <text evidence="1">In the N-terminal section; belongs to the complex I 30 kDa subunit family.</text>
</comment>
<comment type="similarity">
    <text evidence="1">In the C-terminal section; belongs to the complex I 49 kDa subunit family.</text>
</comment>
<sequence length="600" mass="68725">MVNNMTDLTAQEPAWQTRDHLDDPVIGELRNRFGPDAFTVQATRTGVPVVWIKREQLLEVGDFLKKLPKPYVMLFDLHGMDERLRTHREGLPAADFSVFYHLISIDRNRDIMLKVALAENDLHVPTFTKLFPNANWYERETWDLFGITFDGHPNLRRIMMPQTWKGHPLRKDYPARATEFSPFELTKAKQDLEMEALTFKPEEWGMKRGTENEDFMFLNLGPNHPSAHGAFRIVLQLDGEEIVDCVPDIGYHHRGAEKMGERQSWHSYIPYTDRIEYLGGCVNEMPYVLAVEKLAGITVPDRVNVIRVMLSELFRINSHLLYISTFIQDVGAMTPVFFAFTDRQKIYDLVEAITGFRMHPAWFRIGGVAHDLPRGWDRLLREFLDWMPKRLASYEKAALQNTILKGRSQGVAAYGAKEALEWGTTGAGLRATGIDFDVRKARPYSGYENFDFEIPVGGGVSDCYTRVMLKVEELRQSLRILEQCLNNMPEGPFKADHPLTTPPPKERTLQHIETLITHFLQVSWGPVMPANESFQMIEATKGINSYYLTSDGSTMSYRTRIRTPSYAHLQQIPAAIRGSLVSDLIVYLGSIDFVMSDVDR</sequence>
<protein>
    <recommendedName>
        <fullName evidence="1">NADH-quinone oxidoreductase subunit C/D</fullName>
        <ecNumber evidence="1">7.1.1.-</ecNumber>
    </recommendedName>
    <alternativeName>
        <fullName evidence="1">NADH dehydrogenase I subunit C/D</fullName>
    </alternativeName>
    <alternativeName>
        <fullName evidence="1">NDH-1 subunit C/D</fullName>
    </alternativeName>
</protein>
<evidence type="ECO:0000255" key="1">
    <source>
        <dbReference type="HAMAP-Rule" id="MF_01359"/>
    </source>
</evidence>
<proteinExistence type="inferred from homology"/>
<reference key="1">
    <citation type="journal article" date="2009" name="PLoS Genet.">
        <title>Organised genome dynamics in the Escherichia coli species results in highly diverse adaptive paths.</title>
        <authorList>
            <person name="Touchon M."/>
            <person name="Hoede C."/>
            <person name="Tenaillon O."/>
            <person name="Barbe V."/>
            <person name="Baeriswyl S."/>
            <person name="Bidet P."/>
            <person name="Bingen E."/>
            <person name="Bonacorsi S."/>
            <person name="Bouchier C."/>
            <person name="Bouvet O."/>
            <person name="Calteau A."/>
            <person name="Chiapello H."/>
            <person name="Clermont O."/>
            <person name="Cruveiller S."/>
            <person name="Danchin A."/>
            <person name="Diard M."/>
            <person name="Dossat C."/>
            <person name="Karoui M.E."/>
            <person name="Frapy E."/>
            <person name="Garry L."/>
            <person name="Ghigo J.M."/>
            <person name="Gilles A.M."/>
            <person name="Johnson J."/>
            <person name="Le Bouguenec C."/>
            <person name="Lescat M."/>
            <person name="Mangenot S."/>
            <person name="Martinez-Jehanne V."/>
            <person name="Matic I."/>
            <person name="Nassif X."/>
            <person name="Oztas S."/>
            <person name="Petit M.A."/>
            <person name="Pichon C."/>
            <person name="Rouy Z."/>
            <person name="Ruf C.S."/>
            <person name="Schneider D."/>
            <person name="Tourret J."/>
            <person name="Vacherie B."/>
            <person name="Vallenet D."/>
            <person name="Medigue C."/>
            <person name="Rocha E.P.C."/>
            <person name="Denamur E."/>
        </authorList>
    </citation>
    <scope>NUCLEOTIDE SEQUENCE [LARGE SCALE GENOMIC DNA]</scope>
    <source>
        <strain>55989 / EAEC</strain>
    </source>
</reference>
<organism>
    <name type="scientific">Escherichia coli (strain 55989 / EAEC)</name>
    <dbReference type="NCBI Taxonomy" id="585055"/>
    <lineage>
        <taxon>Bacteria</taxon>
        <taxon>Pseudomonadati</taxon>
        <taxon>Pseudomonadota</taxon>
        <taxon>Gammaproteobacteria</taxon>
        <taxon>Enterobacterales</taxon>
        <taxon>Enterobacteriaceae</taxon>
        <taxon>Escherichia</taxon>
    </lineage>
</organism>
<dbReference type="EC" id="7.1.1.-" evidence="1"/>
<dbReference type="EMBL" id="CU928145">
    <property type="protein sequence ID" value="CAU98398.1"/>
    <property type="molecule type" value="Genomic_DNA"/>
</dbReference>
<dbReference type="RefSeq" id="WP_000247878.1">
    <property type="nucleotide sequence ID" value="NC_011748.1"/>
</dbReference>
<dbReference type="SMR" id="B7LAU8"/>
<dbReference type="GeneID" id="93774888"/>
<dbReference type="KEGG" id="eck:EC55989_2530"/>
<dbReference type="HOGENOM" id="CLU_015134_3_2_6"/>
<dbReference type="Proteomes" id="UP000000746">
    <property type="component" value="Chromosome"/>
</dbReference>
<dbReference type="GO" id="GO:0030964">
    <property type="term" value="C:NADH dehydrogenase complex"/>
    <property type="evidence" value="ECO:0007669"/>
    <property type="project" value="InterPro"/>
</dbReference>
<dbReference type="GO" id="GO:0005886">
    <property type="term" value="C:plasma membrane"/>
    <property type="evidence" value="ECO:0007669"/>
    <property type="project" value="UniProtKB-SubCell"/>
</dbReference>
<dbReference type="GO" id="GO:0051287">
    <property type="term" value="F:NAD binding"/>
    <property type="evidence" value="ECO:0007669"/>
    <property type="project" value="InterPro"/>
</dbReference>
<dbReference type="GO" id="GO:0008137">
    <property type="term" value="F:NADH dehydrogenase (ubiquinone) activity"/>
    <property type="evidence" value="ECO:0007669"/>
    <property type="project" value="InterPro"/>
</dbReference>
<dbReference type="GO" id="GO:0050136">
    <property type="term" value="F:NADH:ubiquinone reductase (non-electrogenic) activity"/>
    <property type="evidence" value="ECO:0007669"/>
    <property type="project" value="UniProtKB-UniRule"/>
</dbReference>
<dbReference type="GO" id="GO:0048038">
    <property type="term" value="F:quinone binding"/>
    <property type="evidence" value="ECO:0007669"/>
    <property type="project" value="UniProtKB-KW"/>
</dbReference>
<dbReference type="FunFam" id="1.10.645.10:FF:000001">
    <property type="entry name" value="NADH-quinone oxidoreductase subunit C/D"/>
    <property type="match status" value="1"/>
</dbReference>
<dbReference type="FunFam" id="3.30.460.80:FF:000001">
    <property type="entry name" value="NADH-quinone oxidoreductase subunit C/D"/>
    <property type="match status" value="1"/>
</dbReference>
<dbReference type="Gene3D" id="1.10.645.10">
    <property type="entry name" value="Cytochrome-c3 Hydrogenase, chain B"/>
    <property type="match status" value="1"/>
</dbReference>
<dbReference type="Gene3D" id="3.30.460.80">
    <property type="entry name" value="NADH:ubiquinone oxidoreductase, 30kDa subunit"/>
    <property type="match status" value="1"/>
</dbReference>
<dbReference type="HAMAP" id="MF_01357">
    <property type="entry name" value="NDH1_NuoC"/>
    <property type="match status" value="1"/>
</dbReference>
<dbReference type="HAMAP" id="MF_01359">
    <property type="entry name" value="NDH1_NuoCD_1"/>
    <property type="match status" value="1"/>
</dbReference>
<dbReference type="HAMAP" id="MF_01358">
    <property type="entry name" value="NDH1_NuoD"/>
    <property type="match status" value="1"/>
</dbReference>
<dbReference type="InterPro" id="IPR010218">
    <property type="entry name" value="NADH_DH_suC"/>
</dbReference>
<dbReference type="InterPro" id="IPR023062">
    <property type="entry name" value="NADH_DH_suCD"/>
</dbReference>
<dbReference type="InterPro" id="IPR001135">
    <property type="entry name" value="NADH_Q_OxRdtase_suD"/>
</dbReference>
<dbReference type="InterPro" id="IPR037232">
    <property type="entry name" value="NADH_quin_OxRdtase_su_C/D-like"/>
</dbReference>
<dbReference type="InterPro" id="IPR001268">
    <property type="entry name" value="NADH_UbQ_OxRdtase_30kDa_su"/>
</dbReference>
<dbReference type="InterPro" id="IPR014029">
    <property type="entry name" value="NADH_UbQ_OxRdtase_49kDa_CS"/>
</dbReference>
<dbReference type="InterPro" id="IPR020396">
    <property type="entry name" value="NADH_UbQ_OxRdtase_CS"/>
</dbReference>
<dbReference type="InterPro" id="IPR022885">
    <property type="entry name" value="NDH1_su_D/H"/>
</dbReference>
<dbReference type="InterPro" id="IPR029014">
    <property type="entry name" value="NiFe-Hase_large"/>
</dbReference>
<dbReference type="NCBIfam" id="TIGR01961">
    <property type="entry name" value="NuoC_fam"/>
    <property type="match status" value="1"/>
</dbReference>
<dbReference type="NCBIfam" id="TIGR01962">
    <property type="entry name" value="NuoD"/>
    <property type="match status" value="1"/>
</dbReference>
<dbReference type="NCBIfam" id="NF004739">
    <property type="entry name" value="PRK06075.1"/>
    <property type="match status" value="1"/>
</dbReference>
<dbReference type="NCBIfam" id="NF008728">
    <property type="entry name" value="PRK11742.1"/>
    <property type="match status" value="1"/>
</dbReference>
<dbReference type="PANTHER" id="PTHR11993:SF45">
    <property type="entry name" value="NADH-QUINONE OXIDOREDUCTASE SUBUNIT C_D"/>
    <property type="match status" value="1"/>
</dbReference>
<dbReference type="PANTHER" id="PTHR11993">
    <property type="entry name" value="NADH-UBIQUINONE OXIDOREDUCTASE 49 KDA SUBUNIT"/>
    <property type="match status" value="1"/>
</dbReference>
<dbReference type="Pfam" id="PF00329">
    <property type="entry name" value="Complex1_30kDa"/>
    <property type="match status" value="1"/>
</dbReference>
<dbReference type="Pfam" id="PF00346">
    <property type="entry name" value="Complex1_49kDa"/>
    <property type="match status" value="1"/>
</dbReference>
<dbReference type="SUPFAM" id="SSF56762">
    <property type="entry name" value="HydB/Nqo4-like"/>
    <property type="match status" value="1"/>
</dbReference>
<dbReference type="SUPFAM" id="SSF143243">
    <property type="entry name" value="Nqo5-like"/>
    <property type="match status" value="1"/>
</dbReference>
<dbReference type="PROSITE" id="PS00542">
    <property type="entry name" value="COMPLEX1_30K"/>
    <property type="match status" value="1"/>
</dbReference>
<dbReference type="PROSITE" id="PS00535">
    <property type="entry name" value="COMPLEX1_49K"/>
    <property type="match status" value="1"/>
</dbReference>
<keyword id="KW-0997">Cell inner membrane</keyword>
<keyword id="KW-1003">Cell membrane</keyword>
<keyword id="KW-0472">Membrane</keyword>
<keyword id="KW-0511">Multifunctional enzyme</keyword>
<keyword id="KW-0520">NAD</keyword>
<keyword id="KW-0874">Quinone</keyword>
<keyword id="KW-1185">Reference proteome</keyword>
<keyword id="KW-1278">Translocase</keyword>
<keyword id="KW-0813">Transport</keyword>
<keyword id="KW-0830">Ubiquinone</keyword>
<accession>B7LAU8</accession>